<feature type="chain" id="PRO_1000024776" description="Ribonuclease PH">
    <location>
        <begin position="1"/>
        <end position="245"/>
    </location>
</feature>
<feature type="binding site" evidence="1">
    <location>
        <position position="86"/>
    </location>
    <ligand>
        <name>phosphate</name>
        <dbReference type="ChEBI" id="CHEBI:43474"/>
        <note>substrate</note>
    </ligand>
</feature>
<feature type="binding site" evidence="1">
    <location>
        <begin position="124"/>
        <end position="126"/>
    </location>
    <ligand>
        <name>phosphate</name>
        <dbReference type="ChEBI" id="CHEBI:43474"/>
        <note>substrate</note>
    </ligand>
</feature>
<proteinExistence type="inferred from homology"/>
<dbReference type="EC" id="2.7.7.56" evidence="1"/>
<dbReference type="EMBL" id="CP000560">
    <property type="protein sequence ID" value="ABS74902.1"/>
    <property type="molecule type" value="Genomic_DNA"/>
</dbReference>
<dbReference type="RefSeq" id="WP_007612934.1">
    <property type="nucleotide sequence ID" value="NC_009725.2"/>
</dbReference>
<dbReference type="SMR" id="A7Z7C6"/>
<dbReference type="GeneID" id="93081686"/>
<dbReference type="KEGG" id="bay:RBAM_025440"/>
<dbReference type="HOGENOM" id="CLU_050858_0_0_9"/>
<dbReference type="Proteomes" id="UP000001120">
    <property type="component" value="Chromosome"/>
</dbReference>
<dbReference type="GO" id="GO:0000175">
    <property type="term" value="F:3'-5'-RNA exonuclease activity"/>
    <property type="evidence" value="ECO:0007669"/>
    <property type="project" value="UniProtKB-UniRule"/>
</dbReference>
<dbReference type="GO" id="GO:0000049">
    <property type="term" value="F:tRNA binding"/>
    <property type="evidence" value="ECO:0007669"/>
    <property type="project" value="UniProtKB-UniRule"/>
</dbReference>
<dbReference type="GO" id="GO:0009022">
    <property type="term" value="F:tRNA nucleotidyltransferase activity"/>
    <property type="evidence" value="ECO:0007669"/>
    <property type="project" value="UniProtKB-UniRule"/>
</dbReference>
<dbReference type="GO" id="GO:0016075">
    <property type="term" value="P:rRNA catabolic process"/>
    <property type="evidence" value="ECO:0007669"/>
    <property type="project" value="UniProtKB-UniRule"/>
</dbReference>
<dbReference type="GO" id="GO:0006364">
    <property type="term" value="P:rRNA processing"/>
    <property type="evidence" value="ECO:0007669"/>
    <property type="project" value="UniProtKB-KW"/>
</dbReference>
<dbReference type="GO" id="GO:0008033">
    <property type="term" value="P:tRNA processing"/>
    <property type="evidence" value="ECO:0007669"/>
    <property type="project" value="UniProtKB-UniRule"/>
</dbReference>
<dbReference type="CDD" id="cd11362">
    <property type="entry name" value="RNase_PH_bact"/>
    <property type="match status" value="1"/>
</dbReference>
<dbReference type="FunFam" id="3.30.230.70:FF:000003">
    <property type="entry name" value="Ribonuclease PH"/>
    <property type="match status" value="1"/>
</dbReference>
<dbReference type="Gene3D" id="3.30.230.70">
    <property type="entry name" value="GHMP Kinase, N-terminal domain"/>
    <property type="match status" value="1"/>
</dbReference>
<dbReference type="HAMAP" id="MF_00564">
    <property type="entry name" value="RNase_PH"/>
    <property type="match status" value="1"/>
</dbReference>
<dbReference type="InterPro" id="IPR001247">
    <property type="entry name" value="ExoRNase_PH_dom1"/>
</dbReference>
<dbReference type="InterPro" id="IPR015847">
    <property type="entry name" value="ExoRNase_PH_dom2"/>
</dbReference>
<dbReference type="InterPro" id="IPR036345">
    <property type="entry name" value="ExoRNase_PH_dom2_sf"/>
</dbReference>
<dbReference type="InterPro" id="IPR027408">
    <property type="entry name" value="PNPase/RNase_PH_dom_sf"/>
</dbReference>
<dbReference type="InterPro" id="IPR020568">
    <property type="entry name" value="Ribosomal_Su5_D2-typ_SF"/>
</dbReference>
<dbReference type="InterPro" id="IPR050080">
    <property type="entry name" value="RNase_PH"/>
</dbReference>
<dbReference type="InterPro" id="IPR002381">
    <property type="entry name" value="RNase_PH_bac-type"/>
</dbReference>
<dbReference type="InterPro" id="IPR018336">
    <property type="entry name" value="RNase_PH_CS"/>
</dbReference>
<dbReference type="NCBIfam" id="TIGR01966">
    <property type="entry name" value="RNasePH"/>
    <property type="match status" value="1"/>
</dbReference>
<dbReference type="PANTHER" id="PTHR11953">
    <property type="entry name" value="EXOSOME COMPLEX COMPONENT"/>
    <property type="match status" value="1"/>
</dbReference>
<dbReference type="PANTHER" id="PTHR11953:SF0">
    <property type="entry name" value="EXOSOME COMPLEX COMPONENT RRP41"/>
    <property type="match status" value="1"/>
</dbReference>
<dbReference type="Pfam" id="PF01138">
    <property type="entry name" value="RNase_PH"/>
    <property type="match status" value="1"/>
</dbReference>
<dbReference type="Pfam" id="PF03725">
    <property type="entry name" value="RNase_PH_C"/>
    <property type="match status" value="1"/>
</dbReference>
<dbReference type="SUPFAM" id="SSF55666">
    <property type="entry name" value="Ribonuclease PH domain 2-like"/>
    <property type="match status" value="1"/>
</dbReference>
<dbReference type="SUPFAM" id="SSF54211">
    <property type="entry name" value="Ribosomal protein S5 domain 2-like"/>
    <property type="match status" value="1"/>
</dbReference>
<dbReference type="PROSITE" id="PS01277">
    <property type="entry name" value="RIBONUCLEASE_PH"/>
    <property type="match status" value="1"/>
</dbReference>
<organism>
    <name type="scientific">Bacillus velezensis (strain DSM 23117 / BGSC 10A6 / LMG 26770 / FZB42)</name>
    <name type="common">Bacillus amyloliquefaciens subsp. plantarum</name>
    <dbReference type="NCBI Taxonomy" id="326423"/>
    <lineage>
        <taxon>Bacteria</taxon>
        <taxon>Bacillati</taxon>
        <taxon>Bacillota</taxon>
        <taxon>Bacilli</taxon>
        <taxon>Bacillales</taxon>
        <taxon>Bacillaceae</taxon>
        <taxon>Bacillus</taxon>
        <taxon>Bacillus amyloliquefaciens group</taxon>
    </lineage>
</organism>
<sequence>MRHDGRQHDELRPITFDLDFITHPEGSVLITAGNTKVICNASVEDRVPPFLRGGGKGWITAEYSMLPRATNQRTIRESSKGKVSGRTMEIQRLIGRALRAVVDLEKLGERTIWIDCDVIQADGGTRTASITGAFLAMAIAIGKLVKSGVIKTSPVTDYLAAISVGMDKEEGLLLDLNYEEDSAAEVDMNIIMTGSGRFVELQGTGEEATFSREDLNGLLSLAEKGIQTLIQKQKEVLGETLPELK</sequence>
<comment type="function">
    <text evidence="1">Phosphorolytic 3'-5' exoribonuclease that plays an important role in tRNA 3'-end maturation. Removes nucleotide residues following the 3'-CCA terminus of tRNAs; can also add nucleotides to the ends of RNA molecules by using nucleoside diphosphates as substrates, but this may not be physiologically important. Probably plays a role in initiation of 16S rRNA degradation (leading to ribosome degradation) during starvation.</text>
</comment>
<comment type="catalytic activity">
    <reaction evidence="1">
        <text>tRNA(n+1) + phosphate = tRNA(n) + a ribonucleoside 5'-diphosphate</text>
        <dbReference type="Rhea" id="RHEA:10628"/>
        <dbReference type="Rhea" id="RHEA-COMP:17343"/>
        <dbReference type="Rhea" id="RHEA-COMP:17344"/>
        <dbReference type="ChEBI" id="CHEBI:43474"/>
        <dbReference type="ChEBI" id="CHEBI:57930"/>
        <dbReference type="ChEBI" id="CHEBI:173114"/>
        <dbReference type="EC" id="2.7.7.56"/>
    </reaction>
</comment>
<comment type="subunit">
    <text evidence="1">Homohexameric ring arranged as a trimer of dimers.</text>
</comment>
<comment type="similarity">
    <text evidence="1">Belongs to the RNase PH family.</text>
</comment>
<keyword id="KW-0548">Nucleotidyltransferase</keyword>
<keyword id="KW-0694">RNA-binding</keyword>
<keyword id="KW-0698">rRNA processing</keyword>
<keyword id="KW-0808">Transferase</keyword>
<keyword id="KW-0819">tRNA processing</keyword>
<keyword id="KW-0820">tRNA-binding</keyword>
<name>RNPH_BACVZ</name>
<protein>
    <recommendedName>
        <fullName evidence="1">Ribonuclease PH</fullName>
        <shortName evidence="1">RNase PH</shortName>
        <ecNumber evidence="1">2.7.7.56</ecNumber>
    </recommendedName>
    <alternativeName>
        <fullName evidence="1">tRNA nucleotidyltransferase</fullName>
    </alternativeName>
</protein>
<evidence type="ECO:0000255" key="1">
    <source>
        <dbReference type="HAMAP-Rule" id="MF_00564"/>
    </source>
</evidence>
<reference key="1">
    <citation type="journal article" date="2007" name="Nat. Biotechnol.">
        <title>Comparative analysis of the complete genome sequence of the plant growth-promoting bacterium Bacillus amyloliquefaciens FZB42.</title>
        <authorList>
            <person name="Chen X.H."/>
            <person name="Koumoutsi A."/>
            <person name="Scholz R."/>
            <person name="Eisenreich A."/>
            <person name="Schneider K."/>
            <person name="Heinemeyer I."/>
            <person name="Morgenstern B."/>
            <person name="Voss B."/>
            <person name="Hess W.R."/>
            <person name="Reva O."/>
            <person name="Junge H."/>
            <person name="Voigt B."/>
            <person name="Jungblut P.R."/>
            <person name="Vater J."/>
            <person name="Suessmuth R."/>
            <person name="Liesegang H."/>
            <person name="Strittmatter A."/>
            <person name="Gottschalk G."/>
            <person name="Borriss R."/>
        </authorList>
    </citation>
    <scope>NUCLEOTIDE SEQUENCE [LARGE SCALE GENOMIC DNA]</scope>
    <source>
        <strain>DSM 23117 / BGSC 10A6 / LMG 26770 / FZB42</strain>
    </source>
</reference>
<accession>A7Z7C6</accession>
<gene>
    <name evidence="1" type="primary">rph</name>
    <name type="ordered locus">RBAM_025440</name>
</gene>